<reference key="1">
    <citation type="journal article" date="2013" name="Gene">
        <title>Illumina-based de novo transcriptome sequencing and analysis of Amanita exitialis basidiocarps.</title>
        <authorList>
            <person name="Li P."/>
            <person name="Deng W.Q."/>
            <person name="Li T.H."/>
            <person name="Song B."/>
            <person name="Shen Y.H."/>
        </authorList>
    </citation>
    <scope>NUCLEOTIDE SEQUENCE [MRNA]</scope>
    <scope>FUNCTION</scope>
    <scope>TISSUE SPECIFICITY</scope>
</reference>
<sequence>MSDINATRLPLFFPPDFRPPCVGDADNFTLTRGENLC</sequence>
<accession>U5L3M6</accession>
<dbReference type="EMBL" id="KF387482">
    <property type="protein sequence ID" value="AGW83706.1"/>
    <property type="molecule type" value="mRNA"/>
</dbReference>
<dbReference type="GO" id="GO:0090729">
    <property type="term" value="F:toxin activity"/>
    <property type="evidence" value="ECO:0007669"/>
    <property type="project" value="UniProtKB-KW"/>
</dbReference>
<dbReference type="InterPro" id="IPR027582">
    <property type="entry name" value="Amanitin/phalloidin"/>
</dbReference>
<dbReference type="NCBIfam" id="TIGR04309">
    <property type="entry name" value="amanitin"/>
    <property type="match status" value="1"/>
</dbReference>
<organism>
    <name type="scientific">Amanita exitialis</name>
    <name type="common">Guangzhou destroying angel</name>
    <dbReference type="NCBI Taxonomy" id="262245"/>
    <lineage>
        <taxon>Eukaryota</taxon>
        <taxon>Fungi</taxon>
        <taxon>Dikarya</taxon>
        <taxon>Basidiomycota</taxon>
        <taxon>Agaricomycotina</taxon>
        <taxon>Agaricomycetes</taxon>
        <taxon>Agaricomycetidae</taxon>
        <taxon>Agaricales</taxon>
        <taxon>Pluteineae</taxon>
        <taxon>Amanitaceae</taxon>
        <taxon>Amanita</taxon>
    </lineage>
</organism>
<keyword id="KW-0800">Toxin</keyword>
<evidence type="ECO:0000250" key="1">
    <source>
        <dbReference type="UniProtKB" id="A0A067SLB9"/>
    </source>
</evidence>
<evidence type="ECO:0000269" key="2">
    <source>
    </source>
</evidence>
<evidence type="ECO:0000303" key="3">
    <source>
    </source>
</evidence>
<evidence type="ECO:0000305" key="4"/>
<evidence type="ECO:0000305" key="5">
    <source>
    </source>
</evidence>
<proteinExistence type="evidence at transcript level"/>
<feature type="propeptide" id="PRO_0000443764" evidence="5">
    <location>
        <begin position="1"/>
        <end position="10"/>
    </location>
</feature>
<feature type="peptide" id="PRO_0000443765" description="Toxin MSD5" evidence="5">
    <location>
        <begin position="11"/>
        <end position="20"/>
    </location>
</feature>
<feature type="propeptide" id="PRO_0000443766" evidence="5">
    <location>
        <begin position="21"/>
        <end position="37"/>
    </location>
</feature>
<feature type="cross-link" description="Cyclopeptide (Leu-Pro)" evidence="5">
    <location>
        <begin position="11"/>
        <end position="20"/>
    </location>
</feature>
<name>MSD5_AMAEX</name>
<comment type="function">
    <text evidence="5">Probable toxin that belongs to the MSDIN-like toxin family responsible for a large number of food poisoning cases and deaths (PubMed:24050899).</text>
</comment>
<comment type="tissue specificity">
    <text evidence="2">Expressed in basidiocarps (PubMed:24050899).</text>
</comment>
<comment type="PTM">
    <text evidence="1">Processed by the macrocyclase-peptidase enzyme POPB to yield a toxic cyclic decapeptide (By similarity). POPB first removes 10 residues from the N-terminus (By similarity). Conformational trapping of the remaining peptide forces the enzyme to release this intermediate rather than proceed to macrocyclization (By similarity). The enzyme rebinds the remaining peptide in a different conformation and catalyzes macrocyclization of the N-terminal 10 residues (By similarity).</text>
</comment>
<comment type="similarity">
    <text evidence="4">Belongs to the MSDIN fungal toxin family.</text>
</comment>
<protein>
    <recommendedName>
        <fullName evidence="3">MSDIN-like toxin proprotein 5</fullName>
    </recommendedName>
    <component>
        <recommendedName>
            <fullName evidence="3">Toxin MSD5</fullName>
        </recommendedName>
    </component>
</protein>